<feature type="chain" id="PRO_0000137335" description="Small ribosomal subunit protein eS6">
    <location>
        <begin position="1"/>
        <end position="236"/>
    </location>
</feature>
<feature type="modified residue" description="Phosphoserine" evidence="2">
    <location>
        <position position="232"/>
    </location>
</feature>
<feature type="modified residue" description="Phosphoserine" evidence="2">
    <location>
        <position position="233"/>
    </location>
</feature>
<proteinExistence type="inferred from homology"/>
<sequence>MKLNISYPANGTQKCIDIEDEHKLRVFYEKRMGQEVEGDTVGDEFKGYIFRITGGNDKQGFPMKQGVMHPTRVKLLLAKGHSCYRPRRTGERKRKSVRGCIVAQDLAVLALSVVKQGDSDIEGLTDTTTPKRLGPKRANNIRKFFGLTKEDDVRQFVVRREVVKGDKKYTKAPKIQRLVTPQTLQRKRALKAQKVKNAQQQRDAAAEYAQLLAQRLHERKAERAEIKKRRASSLKA</sequence>
<reference key="1">
    <citation type="journal article" date="2004" name="Nature">
        <title>Genome evolution in yeasts.</title>
        <authorList>
            <person name="Dujon B."/>
            <person name="Sherman D."/>
            <person name="Fischer G."/>
            <person name="Durrens P."/>
            <person name="Casaregola S."/>
            <person name="Lafontaine I."/>
            <person name="de Montigny J."/>
            <person name="Marck C."/>
            <person name="Neuveglise C."/>
            <person name="Talla E."/>
            <person name="Goffard N."/>
            <person name="Frangeul L."/>
            <person name="Aigle M."/>
            <person name="Anthouard V."/>
            <person name="Babour A."/>
            <person name="Barbe V."/>
            <person name="Barnay S."/>
            <person name="Blanchin S."/>
            <person name="Beckerich J.-M."/>
            <person name="Beyne E."/>
            <person name="Bleykasten C."/>
            <person name="Boisrame A."/>
            <person name="Boyer J."/>
            <person name="Cattolico L."/>
            <person name="Confanioleri F."/>
            <person name="de Daruvar A."/>
            <person name="Despons L."/>
            <person name="Fabre E."/>
            <person name="Fairhead C."/>
            <person name="Ferry-Dumazet H."/>
            <person name="Groppi A."/>
            <person name="Hantraye F."/>
            <person name="Hennequin C."/>
            <person name="Jauniaux N."/>
            <person name="Joyet P."/>
            <person name="Kachouri R."/>
            <person name="Kerrest A."/>
            <person name="Koszul R."/>
            <person name="Lemaire M."/>
            <person name="Lesur I."/>
            <person name="Ma L."/>
            <person name="Muller H."/>
            <person name="Nicaud J.-M."/>
            <person name="Nikolski M."/>
            <person name="Oztas S."/>
            <person name="Ozier-Kalogeropoulos O."/>
            <person name="Pellenz S."/>
            <person name="Potier S."/>
            <person name="Richard G.-F."/>
            <person name="Straub M.-L."/>
            <person name="Suleau A."/>
            <person name="Swennen D."/>
            <person name="Tekaia F."/>
            <person name="Wesolowski-Louvel M."/>
            <person name="Westhof E."/>
            <person name="Wirth B."/>
            <person name="Zeniou-Meyer M."/>
            <person name="Zivanovic Y."/>
            <person name="Bolotin-Fukuhara M."/>
            <person name="Thierry A."/>
            <person name="Bouchier C."/>
            <person name="Caudron B."/>
            <person name="Scarpelli C."/>
            <person name="Gaillardin C."/>
            <person name="Weissenbach J."/>
            <person name="Wincker P."/>
            <person name="Souciet J.-L."/>
        </authorList>
    </citation>
    <scope>NUCLEOTIDE SEQUENCE [LARGE SCALE GENOMIC DNA]</scope>
    <source>
        <strain>ATCC 36239 / CBS 767 / BCRC 21394 / JCM 1990 / NBRC 0083 / IGC 2968</strain>
    </source>
</reference>
<gene>
    <name type="primary">RPS6</name>
    <name type="ordered locus">DEHA2B02904g</name>
</gene>
<keyword id="KW-0597">Phosphoprotein</keyword>
<keyword id="KW-1185">Reference proteome</keyword>
<keyword id="KW-0687">Ribonucleoprotein</keyword>
<keyword id="KW-0689">Ribosomal protein</keyword>
<organism>
    <name type="scientific">Debaryomyces hansenii (strain ATCC 36239 / CBS 767 / BCRC 21394 / JCM 1990 / NBRC 0083 / IGC 2968)</name>
    <name type="common">Yeast</name>
    <name type="synonym">Torulaspora hansenii</name>
    <dbReference type="NCBI Taxonomy" id="284592"/>
    <lineage>
        <taxon>Eukaryota</taxon>
        <taxon>Fungi</taxon>
        <taxon>Dikarya</taxon>
        <taxon>Ascomycota</taxon>
        <taxon>Saccharomycotina</taxon>
        <taxon>Pichiomycetes</taxon>
        <taxon>Debaryomycetaceae</taxon>
        <taxon>Debaryomyces</taxon>
    </lineage>
</organism>
<evidence type="ECO:0000250" key="1"/>
<evidence type="ECO:0000255" key="2"/>
<evidence type="ECO:0000305" key="3"/>
<accession>Q6BXH8</accession>
<dbReference type="EMBL" id="CR382134">
    <property type="protein sequence ID" value="CAG85082.1"/>
    <property type="molecule type" value="Genomic_DNA"/>
</dbReference>
<dbReference type="RefSeq" id="XP_457091.1">
    <property type="nucleotide sequence ID" value="XM_457091.1"/>
</dbReference>
<dbReference type="SMR" id="Q6BXH8"/>
<dbReference type="FunCoup" id="Q6BXH8">
    <property type="interactions" value="1180"/>
</dbReference>
<dbReference type="STRING" id="284592.Q6BXH8"/>
<dbReference type="GeneID" id="2913106"/>
<dbReference type="KEGG" id="dha:DEHA2B02904g"/>
<dbReference type="VEuPathDB" id="FungiDB:DEHA2B02904g"/>
<dbReference type="eggNOG" id="KOG1646">
    <property type="taxonomic scope" value="Eukaryota"/>
</dbReference>
<dbReference type="HOGENOM" id="CLU_046346_0_1_1"/>
<dbReference type="InParanoid" id="Q6BXH8"/>
<dbReference type="OMA" id="KPRYKAP"/>
<dbReference type="OrthoDB" id="10260596at2759"/>
<dbReference type="Proteomes" id="UP000000599">
    <property type="component" value="Chromosome B"/>
</dbReference>
<dbReference type="GO" id="GO:1990904">
    <property type="term" value="C:ribonucleoprotein complex"/>
    <property type="evidence" value="ECO:0007669"/>
    <property type="project" value="UniProtKB-KW"/>
</dbReference>
<dbReference type="GO" id="GO:0005840">
    <property type="term" value="C:ribosome"/>
    <property type="evidence" value="ECO:0007669"/>
    <property type="project" value="UniProtKB-KW"/>
</dbReference>
<dbReference type="GO" id="GO:0003735">
    <property type="term" value="F:structural constituent of ribosome"/>
    <property type="evidence" value="ECO:0007669"/>
    <property type="project" value="InterPro"/>
</dbReference>
<dbReference type="GO" id="GO:0006412">
    <property type="term" value="P:translation"/>
    <property type="evidence" value="ECO:0007669"/>
    <property type="project" value="InterPro"/>
</dbReference>
<dbReference type="FunFam" id="1.20.5.2650:FF:000001">
    <property type="entry name" value="40S ribosomal protein S6"/>
    <property type="match status" value="1"/>
</dbReference>
<dbReference type="Gene3D" id="1.20.5.2650">
    <property type="match status" value="1"/>
</dbReference>
<dbReference type="InterPro" id="IPR001377">
    <property type="entry name" value="Ribosomal_eS6"/>
</dbReference>
<dbReference type="InterPro" id="IPR014401">
    <property type="entry name" value="Ribosomal_eS6-like"/>
</dbReference>
<dbReference type="InterPro" id="IPR018282">
    <property type="entry name" value="Ribosomal_eS6_CS"/>
</dbReference>
<dbReference type="PANTHER" id="PTHR11502">
    <property type="entry name" value="40S RIBOSOMAL PROTEIN S6"/>
    <property type="match status" value="1"/>
</dbReference>
<dbReference type="Pfam" id="PF01092">
    <property type="entry name" value="Ribosomal_S6e"/>
    <property type="match status" value="1"/>
</dbReference>
<dbReference type="PIRSF" id="PIRSF002129">
    <property type="entry name" value="Ribosom_S6_euk"/>
    <property type="match status" value="1"/>
</dbReference>
<dbReference type="SMART" id="SM01405">
    <property type="entry name" value="Ribosomal_S6e"/>
    <property type="match status" value="1"/>
</dbReference>
<dbReference type="PROSITE" id="PS00578">
    <property type="entry name" value="RIBOSOMAL_S6E"/>
    <property type="match status" value="1"/>
</dbReference>
<name>RS6_DEBHA</name>
<protein>
    <recommendedName>
        <fullName evidence="3">Small ribosomal subunit protein eS6</fullName>
    </recommendedName>
    <alternativeName>
        <fullName>40S ribosomal protein S6</fullName>
    </alternativeName>
</protein>
<comment type="PTM">
    <text evidence="1">Phosphorylated.</text>
</comment>
<comment type="similarity">
    <text evidence="3">Belongs to the eukaryotic ribosomal protein eS6 family.</text>
</comment>